<dbReference type="EMBL" id="AF008220">
    <property type="protein sequence ID" value="AAC00403.1"/>
    <property type="molecule type" value="Genomic_DNA"/>
</dbReference>
<dbReference type="EMBL" id="AL009126">
    <property type="protein sequence ID" value="CAB14886.1"/>
    <property type="molecule type" value="Genomic_DNA"/>
</dbReference>
<dbReference type="PIR" id="F69998">
    <property type="entry name" value="F69998"/>
</dbReference>
<dbReference type="RefSeq" id="NP_390804.1">
    <property type="nucleotide sequence ID" value="NC_000964.3"/>
</dbReference>
<dbReference type="RefSeq" id="WP_003229401.1">
    <property type="nucleotide sequence ID" value="NZ_OZ025638.1"/>
</dbReference>
<dbReference type="SMR" id="O34922"/>
<dbReference type="FunCoup" id="O34922">
    <property type="interactions" value="36"/>
</dbReference>
<dbReference type="STRING" id="224308.BSU29260"/>
<dbReference type="PaxDb" id="224308-BSU29260"/>
<dbReference type="EnsemblBacteria" id="CAB14886">
    <property type="protein sequence ID" value="CAB14886"/>
    <property type="gene ID" value="BSU_29260"/>
</dbReference>
<dbReference type="GeneID" id="937370"/>
<dbReference type="KEGG" id="bsu:BSU29260"/>
<dbReference type="PATRIC" id="fig|224308.179.peg.3179"/>
<dbReference type="eggNOG" id="ENOG5032X3Q">
    <property type="taxonomic scope" value="Bacteria"/>
</dbReference>
<dbReference type="InParanoid" id="O34922"/>
<dbReference type="OrthoDB" id="2453019at2"/>
<dbReference type="BioCyc" id="BSUB:BSU29260-MONOMER"/>
<dbReference type="Proteomes" id="UP000001570">
    <property type="component" value="Chromosome"/>
</dbReference>
<dbReference type="GO" id="GO:0005886">
    <property type="term" value="C:plasma membrane"/>
    <property type="evidence" value="ECO:0007669"/>
    <property type="project" value="UniProtKB-SubCell"/>
</dbReference>
<dbReference type="InterPro" id="IPR025618">
    <property type="entry name" value="YtpI"/>
</dbReference>
<dbReference type="Pfam" id="PF14007">
    <property type="entry name" value="YtpI"/>
    <property type="match status" value="1"/>
</dbReference>
<reference key="1">
    <citation type="journal article" date="1997" name="Microbiology">
        <title>Sequencing and functional annotation of the Bacillus subtilis genes in the 200 kb rrnB-dnaB region.</title>
        <authorList>
            <person name="Lapidus A."/>
            <person name="Galleron N."/>
            <person name="Sorokin A."/>
            <person name="Ehrlich S.D."/>
        </authorList>
    </citation>
    <scope>NUCLEOTIDE SEQUENCE [GENOMIC DNA]</scope>
    <source>
        <strain>168</strain>
    </source>
</reference>
<reference key="2">
    <citation type="journal article" date="1997" name="Nature">
        <title>The complete genome sequence of the Gram-positive bacterium Bacillus subtilis.</title>
        <authorList>
            <person name="Kunst F."/>
            <person name="Ogasawara N."/>
            <person name="Moszer I."/>
            <person name="Albertini A.M."/>
            <person name="Alloni G."/>
            <person name="Azevedo V."/>
            <person name="Bertero M.G."/>
            <person name="Bessieres P."/>
            <person name="Bolotin A."/>
            <person name="Borchert S."/>
            <person name="Borriss R."/>
            <person name="Boursier L."/>
            <person name="Brans A."/>
            <person name="Braun M."/>
            <person name="Brignell S.C."/>
            <person name="Bron S."/>
            <person name="Brouillet S."/>
            <person name="Bruschi C.V."/>
            <person name="Caldwell B."/>
            <person name="Capuano V."/>
            <person name="Carter N.M."/>
            <person name="Choi S.-K."/>
            <person name="Codani J.-J."/>
            <person name="Connerton I.F."/>
            <person name="Cummings N.J."/>
            <person name="Daniel R.A."/>
            <person name="Denizot F."/>
            <person name="Devine K.M."/>
            <person name="Duesterhoeft A."/>
            <person name="Ehrlich S.D."/>
            <person name="Emmerson P.T."/>
            <person name="Entian K.-D."/>
            <person name="Errington J."/>
            <person name="Fabret C."/>
            <person name="Ferrari E."/>
            <person name="Foulger D."/>
            <person name="Fritz C."/>
            <person name="Fujita M."/>
            <person name="Fujita Y."/>
            <person name="Fuma S."/>
            <person name="Galizzi A."/>
            <person name="Galleron N."/>
            <person name="Ghim S.-Y."/>
            <person name="Glaser P."/>
            <person name="Goffeau A."/>
            <person name="Golightly E.J."/>
            <person name="Grandi G."/>
            <person name="Guiseppi G."/>
            <person name="Guy B.J."/>
            <person name="Haga K."/>
            <person name="Haiech J."/>
            <person name="Harwood C.R."/>
            <person name="Henaut A."/>
            <person name="Hilbert H."/>
            <person name="Holsappel S."/>
            <person name="Hosono S."/>
            <person name="Hullo M.-F."/>
            <person name="Itaya M."/>
            <person name="Jones L.-M."/>
            <person name="Joris B."/>
            <person name="Karamata D."/>
            <person name="Kasahara Y."/>
            <person name="Klaerr-Blanchard M."/>
            <person name="Klein C."/>
            <person name="Kobayashi Y."/>
            <person name="Koetter P."/>
            <person name="Koningstein G."/>
            <person name="Krogh S."/>
            <person name="Kumano M."/>
            <person name="Kurita K."/>
            <person name="Lapidus A."/>
            <person name="Lardinois S."/>
            <person name="Lauber J."/>
            <person name="Lazarevic V."/>
            <person name="Lee S.-M."/>
            <person name="Levine A."/>
            <person name="Liu H."/>
            <person name="Masuda S."/>
            <person name="Mauel C."/>
            <person name="Medigue C."/>
            <person name="Medina N."/>
            <person name="Mellado R.P."/>
            <person name="Mizuno M."/>
            <person name="Moestl D."/>
            <person name="Nakai S."/>
            <person name="Noback M."/>
            <person name="Noone D."/>
            <person name="O'Reilly M."/>
            <person name="Ogawa K."/>
            <person name="Ogiwara A."/>
            <person name="Oudega B."/>
            <person name="Park S.-H."/>
            <person name="Parro V."/>
            <person name="Pohl T.M."/>
            <person name="Portetelle D."/>
            <person name="Porwollik S."/>
            <person name="Prescott A.M."/>
            <person name="Presecan E."/>
            <person name="Pujic P."/>
            <person name="Purnelle B."/>
            <person name="Rapoport G."/>
            <person name="Rey M."/>
            <person name="Reynolds S."/>
            <person name="Rieger M."/>
            <person name="Rivolta C."/>
            <person name="Rocha E."/>
            <person name="Roche B."/>
            <person name="Rose M."/>
            <person name="Sadaie Y."/>
            <person name="Sato T."/>
            <person name="Scanlan E."/>
            <person name="Schleich S."/>
            <person name="Schroeter R."/>
            <person name="Scoffone F."/>
            <person name="Sekiguchi J."/>
            <person name="Sekowska A."/>
            <person name="Seror S.J."/>
            <person name="Serror P."/>
            <person name="Shin B.-S."/>
            <person name="Soldo B."/>
            <person name="Sorokin A."/>
            <person name="Tacconi E."/>
            <person name="Takagi T."/>
            <person name="Takahashi H."/>
            <person name="Takemaru K."/>
            <person name="Takeuchi M."/>
            <person name="Tamakoshi A."/>
            <person name="Tanaka T."/>
            <person name="Terpstra P."/>
            <person name="Tognoni A."/>
            <person name="Tosato V."/>
            <person name="Uchiyama S."/>
            <person name="Vandenbol M."/>
            <person name="Vannier F."/>
            <person name="Vassarotti A."/>
            <person name="Viari A."/>
            <person name="Wambutt R."/>
            <person name="Wedler E."/>
            <person name="Wedler H."/>
            <person name="Weitzenegger T."/>
            <person name="Winters P."/>
            <person name="Wipat A."/>
            <person name="Yamamoto H."/>
            <person name="Yamane K."/>
            <person name="Yasumoto K."/>
            <person name="Yata K."/>
            <person name="Yoshida K."/>
            <person name="Yoshikawa H.-F."/>
            <person name="Zumstein E."/>
            <person name="Yoshikawa H."/>
            <person name="Danchin A."/>
        </authorList>
    </citation>
    <scope>NUCLEOTIDE SEQUENCE [LARGE SCALE GENOMIC DNA]</scope>
    <source>
        <strain>168</strain>
    </source>
</reference>
<gene>
    <name type="primary">ytpI</name>
    <name type="ordered locus">BSU29260</name>
</gene>
<evidence type="ECO:0000255" key="1"/>
<evidence type="ECO:0000305" key="2"/>
<keyword id="KW-1003">Cell membrane</keyword>
<keyword id="KW-0472">Membrane</keyword>
<keyword id="KW-1185">Reference proteome</keyword>
<keyword id="KW-0812">Transmembrane</keyword>
<keyword id="KW-1133">Transmembrane helix</keyword>
<feature type="chain" id="PRO_0000375913" description="Uncharacterized membrane protein YtpI">
    <location>
        <begin position="1"/>
        <end position="100"/>
    </location>
</feature>
<feature type="transmembrane region" description="Helical" evidence="1">
    <location>
        <begin position="1"/>
        <end position="21"/>
    </location>
</feature>
<feature type="transmembrane region" description="Helical" evidence="1">
    <location>
        <begin position="54"/>
        <end position="74"/>
    </location>
</feature>
<proteinExistence type="predicted"/>
<accession>O34922</accession>
<accession>Q795V1</accession>
<protein>
    <recommendedName>
        <fullName>Uncharacterized membrane protein YtpI</fullName>
    </recommendedName>
</protein>
<sequence length="100" mass="10953">MLVLVFLIGLSACFYVYYKVKGVRAKPSLAKEICSAKSSMALGSLVLFYGLNQMILFHSVLTLVIGGIFIVIGAGSAWAGYKAFRHYNPLHAKEAERDHA</sequence>
<comment type="subcellular location">
    <subcellularLocation>
        <location evidence="2">Cell membrane</location>
        <topology evidence="2">Multi-pass membrane protein</topology>
    </subcellularLocation>
</comment>
<name>YTPI_BACSU</name>
<organism>
    <name type="scientific">Bacillus subtilis (strain 168)</name>
    <dbReference type="NCBI Taxonomy" id="224308"/>
    <lineage>
        <taxon>Bacteria</taxon>
        <taxon>Bacillati</taxon>
        <taxon>Bacillota</taxon>
        <taxon>Bacilli</taxon>
        <taxon>Bacillales</taxon>
        <taxon>Bacillaceae</taxon>
        <taxon>Bacillus</taxon>
    </lineage>
</organism>